<proteinExistence type="inferred from homology"/>
<keyword id="KW-0963">Cytoplasm</keyword>
<keyword id="KW-0251">Elongation factor</keyword>
<keyword id="KW-0342">GTP-binding</keyword>
<keyword id="KW-0547">Nucleotide-binding</keyword>
<keyword id="KW-0648">Protein biosynthesis</keyword>
<keyword id="KW-1185">Reference proteome</keyword>
<comment type="function">
    <text evidence="1">Catalyzes the GTP-dependent ribosomal translocation step during translation elongation. During this step, the ribosome changes from the pre-translocational (PRE) to the post-translocational (POST) state as the newly formed A-site-bound peptidyl-tRNA and P-site-bound deacylated tRNA move to the P and E sites, respectively. Catalyzes the coordinated movement of the two tRNA molecules, the mRNA and conformational changes in the ribosome.</text>
</comment>
<comment type="subcellular location">
    <subcellularLocation>
        <location evidence="1">Cytoplasm</location>
    </subcellularLocation>
</comment>
<comment type="similarity">
    <text evidence="1">Belongs to the TRAFAC class translation factor GTPase superfamily. Classic translation factor GTPase family. EF-G/EF-2 subfamily.</text>
</comment>
<evidence type="ECO:0000255" key="1">
    <source>
        <dbReference type="HAMAP-Rule" id="MF_00054"/>
    </source>
</evidence>
<name>EFG1_PSET1</name>
<accession>Q3ILP5</accession>
<dbReference type="EMBL" id="CR954246">
    <property type="protein sequence ID" value="CAI85329.1"/>
    <property type="molecule type" value="Genomic_DNA"/>
</dbReference>
<dbReference type="SMR" id="Q3ILP5"/>
<dbReference type="STRING" id="326442.PSHAa0226"/>
<dbReference type="KEGG" id="pha:PSHAa0226"/>
<dbReference type="PATRIC" id="fig|326442.8.peg.217"/>
<dbReference type="eggNOG" id="COG0480">
    <property type="taxonomic scope" value="Bacteria"/>
</dbReference>
<dbReference type="HOGENOM" id="CLU_002794_4_1_6"/>
<dbReference type="BioCyc" id="PHAL326442:PSHA_RS01115-MONOMER"/>
<dbReference type="Proteomes" id="UP000006843">
    <property type="component" value="Chromosome I"/>
</dbReference>
<dbReference type="GO" id="GO:0005737">
    <property type="term" value="C:cytoplasm"/>
    <property type="evidence" value="ECO:0007669"/>
    <property type="project" value="UniProtKB-SubCell"/>
</dbReference>
<dbReference type="GO" id="GO:0005525">
    <property type="term" value="F:GTP binding"/>
    <property type="evidence" value="ECO:0007669"/>
    <property type="project" value="UniProtKB-UniRule"/>
</dbReference>
<dbReference type="GO" id="GO:0003924">
    <property type="term" value="F:GTPase activity"/>
    <property type="evidence" value="ECO:0007669"/>
    <property type="project" value="InterPro"/>
</dbReference>
<dbReference type="GO" id="GO:0097216">
    <property type="term" value="F:guanosine tetraphosphate binding"/>
    <property type="evidence" value="ECO:0007669"/>
    <property type="project" value="UniProtKB-ARBA"/>
</dbReference>
<dbReference type="GO" id="GO:0003746">
    <property type="term" value="F:translation elongation factor activity"/>
    <property type="evidence" value="ECO:0007669"/>
    <property type="project" value="UniProtKB-UniRule"/>
</dbReference>
<dbReference type="GO" id="GO:0032790">
    <property type="term" value="P:ribosome disassembly"/>
    <property type="evidence" value="ECO:0007669"/>
    <property type="project" value="TreeGrafter"/>
</dbReference>
<dbReference type="CDD" id="cd01886">
    <property type="entry name" value="EF-G"/>
    <property type="match status" value="1"/>
</dbReference>
<dbReference type="CDD" id="cd16262">
    <property type="entry name" value="EFG_III"/>
    <property type="match status" value="1"/>
</dbReference>
<dbReference type="CDD" id="cd01434">
    <property type="entry name" value="EFG_mtEFG1_IV"/>
    <property type="match status" value="1"/>
</dbReference>
<dbReference type="CDD" id="cd03713">
    <property type="entry name" value="EFG_mtEFG_C"/>
    <property type="match status" value="1"/>
</dbReference>
<dbReference type="CDD" id="cd04088">
    <property type="entry name" value="EFG_mtEFG_II"/>
    <property type="match status" value="1"/>
</dbReference>
<dbReference type="FunFam" id="2.40.30.10:FF:000006">
    <property type="entry name" value="Elongation factor G"/>
    <property type="match status" value="1"/>
</dbReference>
<dbReference type="FunFam" id="3.30.230.10:FF:000003">
    <property type="entry name" value="Elongation factor G"/>
    <property type="match status" value="1"/>
</dbReference>
<dbReference type="FunFam" id="3.30.70.240:FF:000001">
    <property type="entry name" value="Elongation factor G"/>
    <property type="match status" value="1"/>
</dbReference>
<dbReference type="FunFam" id="3.30.70.870:FF:000001">
    <property type="entry name" value="Elongation factor G"/>
    <property type="match status" value="1"/>
</dbReference>
<dbReference type="FunFam" id="3.40.50.300:FF:000029">
    <property type="entry name" value="Elongation factor G"/>
    <property type="match status" value="1"/>
</dbReference>
<dbReference type="Gene3D" id="3.30.230.10">
    <property type="match status" value="1"/>
</dbReference>
<dbReference type="Gene3D" id="3.30.70.240">
    <property type="match status" value="1"/>
</dbReference>
<dbReference type="Gene3D" id="3.30.70.870">
    <property type="entry name" value="Elongation Factor G (Translational Gtpase), domain 3"/>
    <property type="match status" value="1"/>
</dbReference>
<dbReference type="Gene3D" id="3.40.50.300">
    <property type="entry name" value="P-loop containing nucleotide triphosphate hydrolases"/>
    <property type="match status" value="1"/>
</dbReference>
<dbReference type="Gene3D" id="2.40.30.10">
    <property type="entry name" value="Translation factors"/>
    <property type="match status" value="1"/>
</dbReference>
<dbReference type="HAMAP" id="MF_00054_B">
    <property type="entry name" value="EF_G_EF_2_B"/>
    <property type="match status" value="1"/>
</dbReference>
<dbReference type="InterPro" id="IPR041095">
    <property type="entry name" value="EFG_II"/>
</dbReference>
<dbReference type="InterPro" id="IPR009022">
    <property type="entry name" value="EFG_III"/>
</dbReference>
<dbReference type="InterPro" id="IPR035647">
    <property type="entry name" value="EFG_III/V"/>
</dbReference>
<dbReference type="InterPro" id="IPR047872">
    <property type="entry name" value="EFG_IV"/>
</dbReference>
<dbReference type="InterPro" id="IPR035649">
    <property type="entry name" value="EFG_V"/>
</dbReference>
<dbReference type="InterPro" id="IPR000640">
    <property type="entry name" value="EFG_V-like"/>
</dbReference>
<dbReference type="InterPro" id="IPR004161">
    <property type="entry name" value="EFTu-like_2"/>
</dbReference>
<dbReference type="InterPro" id="IPR031157">
    <property type="entry name" value="G_TR_CS"/>
</dbReference>
<dbReference type="InterPro" id="IPR027417">
    <property type="entry name" value="P-loop_NTPase"/>
</dbReference>
<dbReference type="InterPro" id="IPR020568">
    <property type="entry name" value="Ribosomal_Su5_D2-typ_SF"/>
</dbReference>
<dbReference type="InterPro" id="IPR014721">
    <property type="entry name" value="Ribsml_uS5_D2-typ_fold_subgr"/>
</dbReference>
<dbReference type="InterPro" id="IPR005225">
    <property type="entry name" value="Small_GTP-bd"/>
</dbReference>
<dbReference type="InterPro" id="IPR000795">
    <property type="entry name" value="T_Tr_GTP-bd_dom"/>
</dbReference>
<dbReference type="InterPro" id="IPR009000">
    <property type="entry name" value="Transl_B-barrel_sf"/>
</dbReference>
<dbReference type="InterPro" id="IPR004540">
    <property type="entry name" value="Transl_elong_EFG/EF2"/>
</dbReference>
<dbReference type="InterPro" id="IPR005517">
    <property type="entry name" value="Transl_elong_EFG/EF2_IV"/>
</dbReference>
<dbReference type="NCBIfam" id="TIGR00484">
    <property type="entry name" value="EF-G"/>
    <property type="match status" value="1"/>
</dbReference>
<dbReference type="NCBIfam" id="NF009381">
    <property type="entry name" value="PRK12740.1-5"/>
    <property type="match status" value="1"/>
</dbReference>
<dbReference type="NCBIfam" id="TIGR00231">
    <property type="entry name" value="small_GTP"/>
    <property type="match status" value="1"/>
</dbReference>
<dbReference type="PANTHER" id="PTHR43261:SF1">
    <property type="entry name" value="RIBOSOME-RELEASING FACTOR 2, MITOCHONDRIAL"/>
    <property type="match status" value="1"/>
</dbReference>
<dbReference type="PANTHER" id="PTHR43261">
    <property type="entry name" value="TRANSLATION ELONGATION FACTOR G-RELATED"/>
    <property type="match status" value="1"/>
</dbReference>
<dbReference type="Pfam" id="PF00679">
    <property type="entry name" value="EFG_C"/>
    <property type="match status" value="1"/>
</dbReference>
<dbReference type="Pfam" id="PF14492">
    <property type="entry name" value="EFG_III"/>
    <property type="match status" value="1"/>
</dbReference>
<dbReference type="Pfam" id="PF03764">
    <property type="entry name" value="EFG_IV"/>
    <property type="match status" value="1"/>
</dbReference>
<dbReference type="Pfam" id="PF00009">
    <property type="entry name" value="GTP_EFTU"/>
    <property type="match status" value="1"/>
</dbReference>
<dbReference type="Pfam" id="PF03144">
    <property type="entry name" value="GTP_EFTU_D2"/>
    <property type="match status" value="1"/>
</dbReference>
<dbReference type="PRINTS" id="PR00315">
    <property type="entry name" value="ELONGATNFCT"/>
</dbReference>
<dbReference type="SMART" id="SM00838">
    <property type="entry name" value="EFG_C"/>
    <property type="match status" value="1"/>
</dbReference>
<dbReference type="SMART" id="SM00889">
    <property type="entry name" value="EFG_IV"/>
    <property type="match status" value="1"/>
</dbReference>
<dbReference type="SUPFAM" id="SSF54980">
    <property type="entry name" value="EF-G C-terminal domain-like"/>
    <property type="match status" value="2"/>
</dbReference>
<dbReference type="SUPFAM" id="SSF52540">
    <property type="entry name" value="P-loop containing nucleoside triphosphate hydrolases"/>
    <property type="match status" value="1"/>
</dbReference>
<dbReference type="SUPFAM" id="SSF54211">
    <property type="entry name" value="Ribosomal protein S5 domain 2-like"/>
    <property type="match status" value="1"/>
</dbReference>
<dbReference type="SUPFAM" id="SSF50447">
    <property type="entry name" value="Translation proteins"/>
    <property type="match status" value="1"/>
</dbReference>
<dbReference type="PROSITE" id="PS00301">
    <property type="entry name" value="G_TR_1"/>
    <property type="match status" value="1"/>
</dbReference>
<dbReference type="PROSITE" id="PS51722">
    <property type="entry name" value="G_TR_2"/>
    <property type="match status" value="1"/>
</dbReference>
<sequence length="704" mass="77485">MARTTPLERYRNIGICAHVDAGKTTTTERILFYTGLSHKIGETHDGAATMDWMEQEQERGITITSAATTCFWKGMDAQFDAHRINIIDTPGHVDFTIEVERSLRVLDGAVVVLCASSGVQPQTETVWRQANKYEVPRMIFVNKMDRTGADFFAVVDQVKSRLGATPVPIQLPIGAEDGFKGVIDLIKMKAINWNEADQGMTFTYEAIPAELQELADEWRSHLVESAAEATEELMDKYLEGEELSEAEIKEALRQRTLANDIVPMTCGSAFKNKGVQAVLDCVVEYMPAPTQVKQIQGILEDGTEEERPADDKAPFAALAFKIATDPFVGTLTFFRVYSGTVKQGDAVYNPVKSKRERLGRIVQMHSNSREEIKEVFAGDIAAAIGLKDVTTGETLCDPKSIITLERMEFPEPVISVAVEPRTIADQDKMGIALGKLAAEDPSFRVQTDEESGQIIISGMGELHLDILVERMKREFSVECNVGKPQVAYREAIRSTVKVEGKFIRQSGGRGQYGHVWLKLEPMDITDDEAPIYEFVNETVGGSIPKEYVPAVDKGIQEQMSQGVLAGYPLLGVKATLYDGSFHDVDSNEMAFKIAGSLAMKQGALQASPVLLEPVMKVEVLTPEANMGDVVGDLNRRRGMIEGMEDALGGLKQINAQVPLSEMFGYATDLRSATQGRASYSMEFLKYAEASKHVAETIISARAVI</sequence>
<organism>
    <name type="scientific">Pseudoalteromonas translucida (strain TAC 125)</name>
    <dbReference type="NCBI Taxonomy" id="326442"/>
    <lineage>
        <taxon>Bacteria</taxon>
        <taxon>Pseudomonadati</taxon>
        <taxon>Pseudomonadota</taxon>
        <taxon>Gammaproteobacteria</taxon>
        <taxon>Alteromonadales</taxon>
        <taxon>Pseudoalteromonadaceae</taxon>
        <taxon>Pseudoalteromonas</taxon>
    </lineage>
</organism>
<gene>
    <name evidence="1" type="primary">fusA1</name>
    <name type="ordered locus">PSHAa0226</name>
</gene>
<feature type="chain" id="PRO_0000225227" description="Elongation factor G 1">
    <location>
        <begin position="1"/>
        <end position="704"/>
    </location>
</feature>
<feature type="domain" description="tr-type G">
    <location>
        <begin position="8"/>
        <end position="290"/>
    </location>
</feature>
<feature type="binding site" evidence="1">
    <location>
        <begin position="17"/>
        <end position="24"/>
    </location>
    <ligand>
        <name>GTP</name>
        <dbReference type="ChEBI" id="CHEBI:37565"/>
    </ligand>
</feature>
<feature type="binding site" evidence="1">
    <location>
        <begin position="88"/>
        <end position="92"/>
    </location>
    <ligand>
        <name>GTP</name>
        <dbReference type="ChEBI" id="CHEBI:37565"/>
    </ligand>
</feature>
<feature type="binding site" evidence="1">
    <location>
        <begin position="142"/>
        <end position="145"/>
    </location>
    <ligand>
        <name>GTP</name>
        <dbReference type="ChEBI" id="CHEBI:37565"/>
    </ligand>
</feature>
<protein>
    <recommendedName>
        <fullName evidence="1">Elongation factor G 1</fullName>
        <shortName evidence="1">EF-G 1</shortName>
    </recommendedName>
</protein>
<reference key="1">
    <citation type="journal article" date="2005" name="Genome Res.">
        <title>Coping with cold: the genome of the versatile marine Antarctica bacterium Pseudoalteromonas haloplanktis TAC125.</title>
        <authorList>
            <person name="Medigue C."/>
            <person name="Krin E."/>
            <person name="Pascal G."/>
            <person name="Barbe V."/>
            <person name="Bernsel A."/>
            <person name="Bertin P.N."/>
            <person name="Cheung F."/>
            <person name="Cruveiller S."/>
            <person name="D'Amico S."/>
            <person name="Duilio A."/>
            <person name="Fang G."/>
            <person name="Feller G."/>
            <person name="Ho C."/>
            <person name="Mangenot S."/>
            <person name="Marino G."/>
            <person name="Nilsson J."/>
            <person name="Parrilli E."/>
            <person name="Rocha E.P.C."/>
            <person name="Rouy Z."/>
            <person name="Sekowska A."/>
            <person name="Tutino M.L."/>
            <person name="Vallenet D."/>
            <person name="von Heijne G."/>
            <person name="Danchin A."/>
        </authorList>
    </citation>
    <scope>NUCLEOTIDE SEQUENCE [LARGE SCALE GENOMIC DNA]</scope>
    <source>
        <strain>TAC 125</strain>
    </source>
</reference>